<gene>
    <name evidence="1" type="primary">pepB</name>
    <name type="ordered locus">Spro_3620</name>
</gene>
<comment type="function">
    <text evidence="1">Probably plays an important role in intracellular peptide degradation.</text>
</comment>
<comment type="catalytic activity">
    <reaction evidence="1">
        <text>Release of an N-terminal amino acid, Xaa, from a peptide or arylamide. Xaa is preferably Glu or Asp but may be other amino acids, including Leu, Met, His, Cys and Gln.</text>
        <dbReference type="EC" id="3.4.11.23"/>
    </reaction>
</comment>
<comment type="cofactor">
    <cofactor evidence="1">
        <name>Mn(2+)</name>
        <dbReference type="ChEBI" id="CHEBI:29035"/>
    </cofactor>
    <text evidence="1">Binds 2 manganese ions per subunit.</text>
</comment>
<comment type="subunit">
    <text evidence="1">Homohexamer.</text>
</comment>
<comment type="subcellular location">
    <subcellularLocation>
        <location evidence="1">Cytoplasm</location>
    </subcellularLocation>
</comment>
<comment type="similarity">
    <text evidence="1">Belongs to the peptidase M17 family.</text>
</comment>
<reference key="1">
    <citation type="submission" date="2007-09" db="EMBL/GenBank/DDBJ databases">
        <title>Complete sequence of chromosome of Serratia proteamaculans 568.</title>
        <authorList>
            <consortium name="US DOE Joint Genome Institute"/>
            <person name="Copeland A."/>
            <person name="Lucas S."/>
            <person name="Lapidus A."/>
            <person name="Barry K."/>
            <person name="Glavina del Rio T."/>
            <person name="Dalin E."/>
            <person name="Tice H."/>
            <person name="Pitluck S."/>
            <person name="Chain P."/>
            <person name="Malfatti S."/>
            <person name="Shin M."/>
            <person name="Vergez L."/>
            <person name="Schmutz J."/>
            <person name="Larimer F."/>
            <person name="Land M."/>
            <person name="Hauser L."/>
            <person name="Kyrpides N."/>
            <person name="Kim E."/>
            <person name="Taghavi S."/>
            <person name="Newman L."/>
            <person name="Vangronsveld J."/>
            <person name="van der Lelie D."/>
            <person name="Richardson P."/>
        </authorList>
    </citation>
    <scope>NUCLEOTIDE SEQUENCE [LARGE SCALE GENOMIC DNA]</scope>
    <source>
        <strain>568</strain>
    </source>
</reference>
<sequence>MTTEFMLVTLSNQSADARWGEKALLSTGAEGMTIHLTGKDKLGSIQRAARKIDGQGIKNVKLAGDGWDLENSWAFWQGFRGPKGKRSVEWAPLPAAESKELEQRLKIVDWVRDTINMSAEELGPEQLATRAVDLMCDIGCEAVSYRITKGEDLREQNYAGIHTVGRGSDRSPVLLALDFNPTGNPEAPVFACLVGKGITFDTGGYSLKQSAFMDSMKADMGGAATITGALALAAARGLKQRVKLYLCCADNMVSGNAFKLGDIIRYRNGKTVEVMNTDAEGRLVLADGLIDASAQNPQLIIDCATLTGAAKTAVGNDYHALFSFDDALAQELLASAAAEQEPFWRLPLAEFHRSQLPSNFAELNNVAGPAYTAGASTAAAFLSHFVTNYQQGWLHIDCSATYRKGAVDQWSAGATGLGVRALANLLLSKAR</sequence>
<proteinExistence type="inferred from homology"/>
<keyword id="KW-0031">Aminopeptidase</keyword>
<keyword id="KW-0963">Cytoplasm</keyword>
<keyword id="KW-0378">Hydrolase</keyword>
<keyword id="KW-0464">Manganese</keyword>
<keyword id="KW-0479">Metal-binding</keyword>
<keyword id="KW-0645">Protease</keyword>
<organism>
    <name type="scientific">Serratia proteamaculans (strain 568)</name>
    <dbReference type="NCBI Taxonomy" id="399741"/>
    <lineage>
        <taxon>Bacteria</taxon>
        <taxon>Pseudomonadati</taxon>
        <taxon>Pseudomonadota</taxon>
        <taxon>Gammaproteobacteria</taxon>
        <taxon>Enterobacterales</taxon>
        <taxon>Yersiniaceae</taxon>
        <taxon>Serratia</taxon>
    </lineage>
</organism>
<feature type="chain" id="PRO_1000060518" description="Peptidase B">
    <location>
        <begin position="1"/>
        <end position="431"/>
    </location>
</feature>
<feature type="active site" evidence="1">
    <location>
        <position position="208"/>
    </location>
</feature>
<feature type="active site" evidence="1">
    <location>
        <position position="282"/>
    </location>
</feature>
<feature type="binding site" evidence="1">
    <location>
        <position position="196"/>
    </location>
    <ligand>
        <name>Mn(2+)</name>
        <dbReference type="ChEBI" id="CHEBI:29035"/>
        <label>2</label>
    </ligand>
</feature>
<feature type="binding site" evidence="1">
    <location>
        <position position="201"/>
    </location>
    <ligand>
        <name>Mn(2+)</name>
        <dbReference type="ChEBI" id="CHEBI:29035"/>
        <label>1</label>
    </ligand>
</feature>
<feature type="binding site" evidence="1">
    <location>
        <position position="201"/>
    </location>
    <ligand>
        <name>Mn(2+)</name>
        <dbReference type="ChEBI" id="CHEBI:29035"/>
        <label>2</label>
    </ligand>
</feature>
<feature type="binding site" evidence="1">
    <location>
        <position position="219"/>
    </location>
    <ligand>
        <name>Mn(2+)</name>
        <dbReference type="ChEBI" id="CHEBI:29035"/>
        <label>2</label>
    </ligand>
</feature>
<feature type="binding site" evidence="1">
    <location>
        <position position="278"/>
    </location>
    <ligand>
        <name>Mn(2+)</name>
        <dbReference type="ChEBI" id="CHEBI:29035"/>
        <label>1</label>
    </ligand>
</feature>
<feature type="binding site" evidence="1">
    <location>
        <position position="280"/>
    </location>
    <ligand>
        <name>Mn(2+)</name>
        <dbReference type="ChEBI" id="CHEBI:29035"/>
        <label>1</label>
    </ligand>
</feature>
<feature type="binding site" evidence="1">
    <location>
        <position position="280"/>
    </location>
    <ligand>
        <name>Mn(2+)</name>
        <dbReference type="ChEBI" id="CHEBI:29035"/>
        <label>2</label>
    </ligand>
</feature>
<protein>
    <recommendedName>
        <fullName evidence="1">Peptidase B</fullName>
        <ecNumber evidence="1">3.4.11.23</ecNumber>
    </recommendedName>
    <alternativeName>
        <fullName evidence="1">Aminopeptidase B</fullName>
    </alternativeName>
</protein>
<name>PEPB_SERP5</name>
<evidence type="ECO:0000255" key="1">
    <source>
        <dbReference type="HAMAP-Rule" id="MF_00504"/>
    </source>
</evidence>
<accession>A8GHX6</accession>
<dbReference type="EC" id="3.4.11.23" evidence="1"/>
<dbReference type="EMBL" id="CP000826">
    <property type="protein sequence ID" value="ABV42716.1"/>
    <property type="molecule type" value="Genomic_DNA"/>
</dbReference>
<dbReference type="SMR" id="A8GHX6"/>
<dbReference type="STRING" id="399741.Spro_3620"/>
<dbReference type="MEROPS" id="M17.004"/>
<dbReference type="KEGG" id="spe:Spro_3620"/>
<dbReference type="eggNOG" id="COG0260">
    <property type="taxonomic scope" value="Bacteria"/>
</dbReference>
<dbReference type="HOGENOM" id="CLU_013734_7_1_6"/>
<dbReference type="GO" id="GO:0005737">
    <property type="term" value="C:cytoplasm"/>
    <property type="evidence" value="ECO:0007669"/>
    <property type="project" value="UniProtKB-SubCell"/>
</dbReference>
<dbReference type="GO" id="GO:0030145">
    <property type="term" value="F:manganese ion binding"/>
    <property type="evidence" value="ECO:0007669"/>
    <property type="project" value="UniProtKB-UniRule"/>
</dbReference>
<dbReference type="GO" id="GO:0070006">
    <property type="term" value="F:metalloaminopeptidase activity"/>
    <property type="evidence" value="ECO:0007669"/>
    <property type="project" value="InterPro"/>
</dbReference>
<dbReference type="GO" id="GO:0006508">
    <property type="term" value="P:proteolysis"/>
    <property type="evidence" value="ECO:0007669"/>
    <property type="project" value="UniProtKB-UniRule"/>
</dbReference>
<dbReference type="CDD" id="cd00433">
    <property type="entry name" value="Peptidase_M17"/>
    <property type="match status" value="1"/>
</dbReference>
<dbReference type="FunFam" id="3.40.630.10:FF:000037">
    <property type="entry name" value="Peptidase B"/>
    <property type="match status" value="1"/>
</dbReference>
<dbReference type="Gene3D" id="3.40.630.10">
    <property type="entry name" value="Zn peptidases"/>
    <property type="match status" value="1"/>
</dbReference>
<dbReference type="HAMAP" id="MF_00504">
    <property type="entry name" value="Aminopeptidase_M17"/>
    <property type="match status" value="1"/>
</dbReference>
<dbReference type="InterPro" id="IPR011356">
    <property type="entry name" value="Leucine_aapep/pepB"/>
</dbReference>
<dbReference type="InterPro" id="IPR047620">
    <property type="entry name" value="M17_PepB-like_N"/>
</dbReference>
<dbReference type="InterPro" id="IPR008330">
    <property type="entry name" value="Pept_M17_PepB"/>
</dbReference>
<dbReference type="InterPro" id="IPR000819">
    <property type="entry name" value="Peptidase_M17_C"/>
</dbReference>
<dbReference type="NCBIfam" id="NF003450">
    <property type="entry name" value="PRK05015.1"/>
    <property type="match status" value="1"/>
</dbReference>
<dbReference type="PANTHER" id="PTHR11963">
    <property type="entry name" value="LEUCINE AMINOPEPTIDASE-RELATED"/>
    <property type="match status" value="1"/>
</dbReference>
<dbReference type="PANTHER" id="PTHR11963:SF20">
    <property type="entry name" value="PEPTIDASE B"/>
    <property type="match status" value="1"/>
</dbReference>
<dbReference type="Pfam" id="PF12404">
    <property type="entry name" value="DUF3663"/>
    <property type="match status" value="1"/>
</dbReference>
<dbReference type="Pfam" id="PF00883">
    <property type="entry name" value="Peptidase_M17"/>
    <property type="match status" value="1"/>
</dbReference>
<dbReference type="PIRSF" id="PIRSF036388">
    <property type="entry name" value="Ctsl_amnpptdse_B"/>
    <property type="match status" value="1"/>
</dbReference>
<dbReference type="PRINTS" id="PR00481">
    <property type="entry name" value="LAMNOPPTDASE"/>
</dbReference>
<dbReference type="SUPFAM" id="SSF53187">
    <property type="entry name" value="Zn-dependent exopeptidases"/>
    <property type="match status" value="1"/>
</dbReference>
<dbReference type="PROSITE" id="PS00631">
    <property type="entry name" value="CYTOSOL_AP"/>
    <property type="match status" value="1"/>
</dbReference>